<keyword id="KW-0045">Antibiotic biosynthesis</keyword>
<keyword id="KW-1185">Reference proteome</keyword>
<keyword id="KW-0808">Transferase</keyword>
<reference key="1">
    <citation type="journal article" date="2008" name="Chem. Biol.">
        <title>Cloning, expression, and biochemical characterization of Streptomyces rubellomurinus genes required for biosynthesis of antimalarial compound FR900098.</title>
        <authorList>
            <person name="Eliot A.C."/>
            <person name="Griffin B.M."/>
            <person name="Thomas P.M."/>
            <person name="Johannes T.W."/>
            <person name="Kelleher N.L."/>
            <person name="Zhao H."/>
            <person name="Metcalf W.W."/>
        </authorList>
    </citation>
    <scope>NUCLEOTIDE SEQUENCE [GENOMIC DNA]</scope>
    <scope>FUNCTION</scope>
    <scope>CATALYTIC ACTIVITY</scope>
    <scope>PATHWAY</scope>
    <source>
        <strain>ATCC 31215</strain>
    </source>
</reference>
<reference key="2">
    <citation type="submission" date="2015-02" db="EMBL/GenBank/DDBJ databases">
        <authorList>
            <person name="Ju K.-S."/>
            <person name="Doroghazi J.R."/>
            <person name="Metcalf W."/>
        </authorList>
    </citation>
    <scope>NUCLEOTIDE SEQUENCE [LARGE SCALE GENOMIC DNA]</scope>
    <source>
        <strain>ATCC 31215</strain>
    </source>
</reference>
<proteinExistence type="evidence at protein level"/>
<evidence type="ECO:0000255" key="1">
    <source>
        <dbReference type="PROSITE-ProRule" id="PRU01151"/>
    </source>
</evidence>
<evidence type="ECO:0000269" key="2">
    <source>
    </source>
</evidence>
<evidence type="ECO:0000303" key="3">
    <source>
    </source>
</evidence>
<evidence type="ECO:0000305" key="4"/>
<evidence type="ECO:0000312" key="5">
    <source>
        <dbReference type="EMBL" id="KJS60087.1"/>
    </source>
</evidence>
<name>FRBC_STRR3</name>
<protein>
    <recommendedName>
        <fullName evidence="3">2-phosphonomethylmalate synthase</fullName>
        <ecNumber evidence="2">2.3.3.19</ecNumber>
    </recommendedName>
</protein>
<gene>
    <name evidence="3" type="primary">frbC</name>
    <name evidence="5" type="ORF">VM95_23205</name>
</gene>
<accession>Q0ZQ46</accession>
<feature type="chain" id="PRO_0000443947" description="2-phosphonomethylmalate synthase">
    <location>
        <begin position="1"/>
        <end position="373"/>
    </location>
</feature>
<feature type="domain" description="Pyruvate carboxyltransferase" evidence="1">
    <location>
        <begin position="5"/>
        <end position="256"/>
    </location>
</feature>
<organism>
    <name type="scientific">Streptomyces rubellomurinus (strain ATCC 31215)</name>
    <dbReference type="NCBI Taxonomy" id="359131"/>
    <lineage>
        <taxon>Bacteria</taxon>
        <taxon>Bacillati</taxon>
        <taxon>Actinomycetota</taxon>
        <taxon>Actinomycetes</taxon>
        <taxon>Kitasatosporales</taxon>
        <taxon>Streptomycetaceae</taxon>
        <taxon>Streptomyces</taxon>
    </lineage>
</organism>
<dbReference type="EC" id="2.3.3.19" evidence="2"/>
<dbReference type="EMBL" id="DQ267750">
    <property type="protein sequence ID" value="ABB90392.1"/>
    <property type="molecule type" value="Genomic_DNA"/>
</dbReference>
<dbReference type="EMBL" id="JZKH01000051">
    <property type="protein sequence ID" value="KJS60087.1"/>
    <property type="molecule type" value="Genomic_DNA"/>
</dbReference>
<dbReference type="RefSeq" id="WP_045699990.1">
    <property type="nucleotide sequence ID" value="NZ_JZKH01000051.1"/>
</dbReference>
<dbReference type="SMR" id="Q0ZQ46"/>
<dbReference type="KEGG" id="ag:ABB90392"/>
<dbReference type="PATRIC" id="fig|359131.3.peg.5648"/>
<dbReference type="OrthoDB" id="9803573at2"/>
<dbReference type="BioCyc" id="MetaCyc:MONOMER-18399"/>
<dbReference type="BRENDA" id="2.3.3.19">
    <property type="organism ID" value="15041"/>
</dbReference>
<dbReference type="Proteomes" id="UP000033699">
    <property type="component" value="Unassembled WGS sequence"/>
</dbReference>
<dbReference type="GO" id="GO:0046912">
    <property type="term" value="F:acyltransferase activity, acyl groups converted into alkyl on transfer"/>
    <property type="evidence" value="ECO:0007669"/>
    <property type="project" value="InterPro"/>
</dbReference>
<dbReference type="GO" id="GO:0017000">
    <property type="term" value="P:antibiotic biosynthetic process"/>
    <property type="evidence" value="ECO:0007669"/>
    <property type="project" value="UniProtKB-KW"/>
</dbReference>
<dbReference type="GO" id="GO:0019752">
    <property type="term" value="P:carboxylic acid metabolic process"/>
    <property type="evidence" value="ECO:0007669"/>
    <property type="project" value="InterPro"/>
</dbReference>
<dbReference type="CDD" id="cd07939">
    <property type="entry name" value="DRE_TIM_NifV"/>
    <property type="match status" value="1"/>
</dbReference>
<dbReference type="Gene3D" id="1.10.238.260">
    <property type="match status" value="1"/>
</dbReference>
<dbReference type="Gene3D" id="3.20.20.70">
    <property type="entry name" value="Aldolase class I"/>
    <property type="match status" value="1"/>
</dbReference>
<dbReference type="InterPro" id="IPR002034">
    <property type="entry name" value="AIPM/Hcit_synth_CS"/>
</dbReference>
<dbReference type="InterPro" id="IPR013785">
    <property type="entry name" value="Aldolase_TIM"/>
</dbReference>
<dbReference type="InterPro" id="IPR054691">
    <property type="entry name" value="LeuA/HCS_post-cat"/>
</dbReference>
<dbReference type="InterPro" id="IPR013477">
    <property type="entry name" value="NifV/FrbC"/>
</dbReference>
<dbReference type="InterPro" id="IPR000891">
    <property type="entry name" value="PYR_CT"/>
</dbReference>
<dbReference type="PANTHER" id="PTHR42880">
    <property type="entry name" value="HOMOCITRATE SYNTHASE"/>
    <property type="match status" value="1"/>
</dbReference>
<dbReference type="PANTHER" id="PTHR42880:SF1">
    <property type="entry name" value="ISOPROPYLMALATE_HOMOCITRATE_CITRAMALATE SYNTHASE FAMILY PROTEIN"/>
    <property type="match status" value="1"/>
</dbReference>
<dbReference type="Pfam" id="PF22617">
    <property type="entry name" value="HCS_D2"/>
    <property type="match status" value="1"/>
</dbReference>
<dbReference type="Pfam" id="PF00682">
    <property type="entry name" value="HMGL-like"/>
    <property type="match status" value="1"/>
</dbReference>
<dbReference type="SUPFAM" id="SSF51569">
    <property type="entry name" value="Aldolase"/>
    <property type="match status" value="1"/>
</dbReference>
<dbReference type="PROSITE" id="PS00815">
    <property type="entry name" value="AIPM_HOMOCIT_SYNTH_1"/>
    <property type="match status" value="1"/>
</dbReference>
<dbReference type="PROSITE" id="PS00816">
    <property type="entry name" value="AIPM_HOMOCIT_SYNTH_2"/>
    <property type="match status" value="1"/>
</dbReference>
<dbReference type="PROSITE" id="PS50991">
    <property type="entry name" value="PYR_CT"/>
    <property type="match status" value="1"/>
</dbReference>
<comment type="function">
    <text evidence="2">Acyltransferase involved in the biosynthesis of the phosphonate antibiotic FR-900098, a potent antimalarial agent that acts as an inhibitor of 1-deoxy-D-xylulose 5-phosphate reductoisomerase (DXR), the first enzyme in the nonmevalonate pathway for isoprenoid biosynthesis (PubMed:18721747). Catalyzes the condensation between acetyl-CoA and phosphonopyruvate to yield (R)-2-(phosphonomethyl)malate (PubMed:18721747).</text>
</comment>
<comment type="catalytic activity">
    <reaction evidence="2">
        <text>3-phosphonopyruvate + acetyl-CoA + H2O = (R)-2-(phosphonomethyl)malate + CoA + H(+)</text>
        <dbReference type="Rhea" id="RHEA:52144"/>
        <dbReference type="ChEBI" id="CHEBI:15377"/>
        <dbReference type="ChEBI" id="CHEBI:15378"/>
        <dbReference type="ChEBI" id="CHEBI:57287"/>
        <dbReference type="ChEBI" id="CHEBI:57288"/>
        <dbReference type="ChEBI" id="CHEBI:71402"/>
        <dbReference type="ChEBI" id="CHEBI:136541"/>
        <dbReference type="EC" id="2.3.3.19"/>
    </reaction>
    <physiologicalReaction direction="left-to-right" evidence="2">
        <dbReference type="Rhea" id="RHEA:52145"/>
    </physiologicalReaction>
</comment>
<comment type="pathway">
    <text evidence="2">Antibiotic biosynthesis.</text>
</comment>
<comment type="similarity">
    <text evidence="4">Belongs to the alpha-IPM synthase/homocitrate synthase family.</text>
</comment>
<sequence>MRNDLVLEDTTLRDGEQTPGVAFSKETKTAILNALIEAGVTSIEIGIPAMGGEELDFIKSVVDRQDEARLVVWHRGVREDVERSLDLGFTSVHVGLPTSAGHLKASVRKDRTWLLATARDMVKMAKDRGAFVSISAEDIARTEISFLQEYAGVVAEAGADRLRLSDTVGLLGPEAYGERVAAVLSAADIDVQCHAHNDFGLATANTLAGLKAGARYFHVTVNAIGERAGMADLAQVVVALKKLYDRDLGIDLTKLKKVSRLVAEAAGHQVLPWQPITGDNVFAHESGIHANGMFRDTSSFEPFPPEHVGGERRYVLGKHSGRALVAWALEQEGITPREELLPHCLEEVRALSIRIGGAVSHEQLVEIYNKAAA</sequence>